<reference key="1">
    <citation type="journal article" date="1990" name="DNA Seq.">
        <title>Nucleotide sequence of the Salmonella typhimurium glyA gene.</title>
        <authorList>
            <person name="Steiert J.G."/>
            <person name="Urbanowski M.L."/>
            <person name="Stauffer L.T."/>
            <person name="Plamann M.D."/>
            <person name="Stauffer G.V."/>
        </authorList>
    </citation>
    <scope>NUCLEOTIDE SEQUENCE [GENOMIC DNA]</scope>
    <source>
        <strain>LT2</strain>
    </source>
</reference>
<reference key="2">
    <citation type="journal article" date="2001" name="Nature">
        <title>Complete genome sequence of Salmonella enterica serovar Typhimurium LT2.</title>
        <authorList>
            <person name="McClelland M."/>
            <person name="Sanderson K.E."/>
            <person name="Spieth J."/>
            <person name="Clifton S.W."/>
            <person name="Latreille P."/>
            <person name="Courtney L."/>
            <person name="Porwollik S."/>
            <person name="Ali J."/>
            <person name="Dante M."/>
            <person name="Du F."/>
            <person name="Hou S."/>
            <person name="Layman D."/>
            <person name="Leonard S."/>
            <person name="Nguyen C."/>
            <person name="Scott K."/>
            <person name="Holmes A."/>
            <person name="Grewal N."/>
            <person name="Mulvaney E."/>
            <person name="Ryan E."/>
            <person name="Sun H."/>
            <person name="Florea L."/>
            <person name="Miller W."/>
            <person name="Stoneking T."/>
            <person name="Nhan M."/>
            <person name="Waterston R."/>
            <person name="Wilson R.K."/>
        </authorList>
    </citation>
    <scope>NUCLEOTIDE SEQUENCE [LARGE SCALE GENOMIC DNA]</scope>
    <source>
        <strain>LT2 / SGSC1412 / ATCC 700720</strain>
    </source>
</reference>
<reference key="3">
    <citation type="journal article" date="1984" name="Gene">
        <title>Cloning and characterization of the gene for Salmonella typhimurium serine hydroxymethyltransferase.</title>
        <authorList>
            <person name="Urbanowski M.L."/>
            <person name="Plamann M.D."/>
            <person name="Stauffer L.T."/>
            <person name="Stauffer G.V."/>
        </authorList>
    </citation>
    <scope>NUCLEOTIDE SEQUENCE [GENOMIC DNA] OF 179-215</scope>
    <source>
        <strain>LT2</strain>
    </source>
</reference>
<reference key="4">
    <citation type="submission" date="2009-02" db="PDB data bank">
        <title>X-ray crystal structure of serine hydroxymethyltransferase from Salmonella typhimurium.</title>
        <authorList>
            <consortium name="Center for structural genomics of infectious diseases (CSGID)"/>
            <person name="Osipiuk J."/>
            <person name="Nocek B."/>
            <person name="Zhou M."/>
            <person name="Stam J."/>
            <person name="Anderson W.F."/>
            <person name="Joachimiak A."/>
        </authorList>
    </citation>
    <scope>X-RAY CRYSTALLOGRAPHY (1.80 ANGSTROMS)</scope>
    <scope>SUBUNIT</scope>
</reference>
<protein>
    <recommendedName>
        <fullName evidence="1">Serine hydroxymethyltransferase</fullName>
        <shortName evidence="1">SHMT</shortName>
        <shortName evidence="1">Serine methylase</shortName>
        <ecNumber evidence="1">2.1.2.1</ecNumber>
    </recommendedName>
</protein>
<proteinExistence type="evidence at protein level"/>
<comment type="function">
    <text evidence="1">Catalyzes the reversible interconversion of serine and glycine with tetrahydrofolate (THF) serving as the one-carbon carrier. This reaction serves as the major source of one-carbon groups required for the biosynthesis of purines, thymidylate, methionine, and other important biomolecules. Also exhibits THF-independent aldolase activity toward beta-hydroxyamino acids, producing glycine and aldehydes, via a retro-aldol mechanism.</text>
</comment>
<comment type="catalytic activity">
    <reaction evidence="1">
        <text>(6R)-5,10-methylene-5,6,7,8-tetrahydrofolate + glycine + H2O = (6S)-5,6,7,8-tetrahydrofolate + L-serine</text>
        <dbReference type="Rhea" id="RHEA:15481"/>
        <dbReference type="ChEBI" id="CHEBI:15377"/>
        <dbReference type="ChEBI" id="CHEBI:15636"/>
        <dbReference type="ChEBI" id="CHEBI:33384"/>
        <dbReference type="ChEBI" id="CHEBI:57305"/>
        <dbReference type="ChEBI" id="CHEBI:57453"/>
        <dbReference type="EC" id="2.1.2.1"/>
    </reaction>
</comment>
<comment type="cofactor">
    <cofactor evidence="1">
        <name>pyridoxal 5'-phosphate</name>
        <dbReference type="ChEBI" id="CHEBI:597326"/>
    </cofactor>
</comment>
<comment type="pathway">
    <text evidence="1">One-carbon metabolism; tetrahydrofolate interconversion.</text>
</comment>
<comment type="pathway">
    <text evidence="1">Amino-acid biosynthesis; glycine biosynthesis; glycine from L-serine: step 1/1.</text>
</comment>
<comment type="subunit">
    <text evidence="1 2">Homodimer.</text>
</comment>
<comment type="subcellular location">
    <subcellularLocation>
        <location evidence="1">Cytoplasm</location>
    </subcellularLocation>
</comment>
<comment type="similarity">
    <text evidence="1 3">Belongs to the SHMT family.</text>
</comment>
<dbReference type="EC" id="2.1.2.1" evidence="1"/>
<dbReference type="EMBL" id="X15816">
    <property type="protein sequence ID" value="CAA33808.1"/>
    <property type="molecule type" value="Genomic_DNA"/>
</dbReference>
<dbReference type="EMBL" id="AE006468">
    <property type="protein sequence ID" value="AAL21449.1"/>
    <property type="molecule type" value="Genomic_DNA"/>
</dbReference>
<dbReference type="EMBL" id="K01616">
    <property type="protein sequence ID" value="AAA27135.1"/>
    <property type="molecule type" value="Genomic_DNA"/>
</dbReference>
<dbReference type="PIR" id="B48427">
    <property type="entry name" value="B48427"/>
</dbReference>
<dbReference type="RefSeq" id="NP_461490.1">
    <property type="nucleotide sequence ID" value="NC_003197.2"/>
</dbReference>
<dbReference type="RefSeq" id="WP_000919178.1">
    <property type="nucleotide sequence ID" value="NC_003197.2"/>
</dbReference>
<dbReference type="PDB" id="3GBX">
    <property type="method" value="X-ray"/>
    <property type="resolution" value="1.80 A"/>
    <property type="chains" value="A/B=1-417"/>
</dbReference>
<dbReference type="PDBsum" id="3GBX"/>
<dbReference type="SMR" id="P0A2E1"/>
<dbReference type="STRING" id="99287.STM2555"/>
<dbReference type="PaxDb" id="99287-STM2555"/>
<dbReference type="GeneID" id="1254077"/>
<dbReference type="KEGG" id="stm:STM2555"/>
<dbReference type="PATRIC" id="fig|99287.12.peg.2695"/>
<dbReference type="HOGENOM" id="CLU_022477_2_1_6"/>
<dbReference type="OMA" id="CQFANVQ"/>
<dbReference type="PhylomeDB" id="P0A2E1"/>
<dbReference type="BioCyc" id="SENT99287:STM2555-MONOMER"/>
<dbReference type="BRENDA" id="2.1.2.1">
    <property type="organism ID" value="5542"/>
</dbReference>
<dbReference type="UniPathway" id="UPA00193"/>
<dbReference type="UniPathway" id="UPA00288">
    <property type="reaction ID" value="UER01023"/>
</dbReference>
<dbReference type="EvolutionaryTrace" id="P0A2E1"/>
<dbReference type="Proteomes" id="UP000001014">
    <property type="component" value="Chromosome"/>
</dbReference>
<dbReference type="GO" id="GO:0005737">
    <property type="term" value="C:cytoplasm"/>
    <property type="evidence" value="ECO:0000318"/>
    <property type="project" value="GO_Central"/>
</dbReference>
<dbReference type="GO" id="GO:0005829">
    <property type="term" value="C:cytosol"/>
    <property type="evidence" value="ECO:0000318"/>
    <property type="project" value="GO_Central"/>
</dbReference>
<dbReference type="GO" id="GO:0004372">
    <property type="term" value="F:glycine hydroxymethyltransferase activity"/>
    <property type="evidence" value="ECO:0000318"/>
    <property type="project" value="GO_Central"/>
</dbReference>
<dbReference type="GO" id="GO:0030170">
    <property type="term" value="F:pyridoxal phosphate binding"/>
    <property type="evidence" value="ECO:0000318"/>
    <property type="project" value="GO_Central"/>
</dbReference>
<dbReference type="GO" id="GO:0019264">
    <property type="term" value="P:glycine biosynthetic process from serine"/>
    <property type="evidence" value="ECO:0000318"/>
    <property type="project" value="GO_Central"/>
</dbReference>
<dbReference type="GO" id="GO:0035999">
    <property type="term" value="P:tetrahydrofolate interconversion"/>
    <property type="evidence" value="ECO:0007669"/>
    <property type="project" value="UniProtKB-UniRule"/>
</dbReference>
<dbReference type="GO" id="GO:0046653">
    <property type="term" value="P:tetrahydrofolate metabolic process"/>
    <property type="evidence" value="ECO:0000318"/>
    <property type="project" value="GO_Central"/>
</dbReference>
<dbReference type="CDD" id="cd00378">
    <property type="entry name" value="SHMT"/>
    <property type="match status" value="1"/>
</dbReference>
<dbReference type="FunFam" id="3.40.640.10:FF:000001">
    <property type="entry name" value="Serine hydroxymethyltransferase"/>
    <property type="match status" value="1"/>
</dbReference>
<dbReference type="FunFam" id="3.90.1150.10:FF:000003">
    <property type="entry name" value="Serine hydroxymethyltransferase"/>
    <property type="match status" value="1"/>
</dbReference>
<dbReference type="Gene3D" id="3.90.1150.10">
    <property type="entry name" value="Aspartate Aminotransferase, domain 1"/>
    <property type="match status" value="1"/>
</dbReference>
<dbReference type="Gene3D" id="3.40.640.10">
    <property type="entry name" value="Type I PLP-dependent aspartate aminotransferase-like (Major domain)"/>
    <property type="match status" value="1"/>
</dbReference>
<dbReference type="HAMAP" id="MF_00051">
    <property type="entry name" value="SHMT"/>
    <property type="match status" value="1"/>
</dbReference>
<dbReference type="InterPro" id="IPR015424">
    <property type="entry name" value="PyrdxlP-dep_Trfase"/>
</dbReference>
<dbReference type="InterPro" id="IPR015421">
    <property type="entry name" value="PyrdxlP-dep_Trfase_major"/>
</dbReference>
<dbReference type="InterPro" id="IPR015422">
    <property type="entry name" value="PyrdxlP-dep_Trfase_small"/>
</dbReference>
<dbReference type="InterPro" id="IPR001085">
    <property type="entry name" value="Ser_HO-MeTrfase"/>
</dbReference>
<dbReference type="InterPro" id="IPR049943">
    <property type="entry name" value="Ser_HO-MeTrfase-like"/>
</dbReference>
<dbReference type="InterPro" id="IPR019798">
    <property type="entry name" value="Ser_HO-MeTrfase_PLP_BS"/>
</dbReference>
<dbReference type="InterPro" id="IPR039429">
    <property type="entry name" value="SHMT-like_dom"/>
</dbReference>
<dbReference type="NCBIfam" id="NF000586">
    <property type="entry name" value="PRK00011.1"/>
    <property type="match status" value="1"/>
</dbReference>
<dbReference type="PANTHER" id="PTHR11680">
    <property type="entry name" value="SERINE HYDROXYMETHYLTRANSFERASE"/>
    <property type="match status" value="1"/>
</dbReference>
<dbReference type="PANTHER" id="PTHR11680:SF50">
    <property type="entry name" value="SERINE HYDROXYMETHYLTRANSFERASE"/>
    <property type="match status" value="1"/>
</dbReference>
<dbReference type="Pfam" id="PF00464">
    <property type="entry name" value="SHMT"/>
    <property type="match status" value="1"/>
</dbReference>
<dbReference type="PIRSF" id="PIRSF000412">
    <property type="entry name" value="SHMT"/>
    <property type="match status" value="1"/>
</dbReference>
<dbReference type="SUPFAM" id="SSF53383">
    <property type="entry name" value="PLP-dependent transferases"/>
    <property type="match status" value="1"/>
</dbReference>
<dbReference type="PROSITE" id="PS00096">
    <property type="entry name" value="SHMT"/>
    <property type="match status" value="1"/>
</dbReference>
<organism>
    <name type="scientific">Salmonella typhimurium (strain LT2 / SGSC1412 / ATCC 700720)</name>
    <dbReference type="NCBI Taxonomy" id="99287"/>
    <lineage>
        <taxon>Bacteria</taxon>
        <taxon>Pseudomonadati</taxon>
        <taxon>Pseudomonadota</taxon>
        <taxon>Gammaproteobacteria</taxon>
        <taxon>Enterobacterales</taxon>
        <taxon>Enterobacteriaceae</taxon>
        <taxon>Salmonella</taxon>
    </lineage>
</organism>
<sequence>MLKREMNIADYDAELWQAMEQEKVRQEEHIELIASENYTSPRVMQAQGSQLTNKYAEGYPGKRYYGGCEYVDVVEQLAIDRAKELFGADYANVQPHSGSQANFAVYTALLQPGDTVLGMNLAQGGHLTHGSPVNFSGKLYNIVPYGIDESGKIDYDEMAKLAKEHKPKMIIGGFSAYSGVVDWAKMREIADSIGAYLFVDMAHVAGLIAAGVYPNPVPHAHVVTTTTHKTLAGPRGGLILAKGGDEELYKKLNSAVFPSAQGGPLMHVIAGKAVALKEAMEPEFKVYQQQVAKNAKAMVEVFLNRGYKVVSGGTENHLFLLDLVDKNLTGKEADAALGRANITVNKNSVPNDPKSPFVTSGIRIGSPAVTRRGFKEAEVKELAGWMCDVLDNINDEATIERVKAKVLDICARFPVYA</sequence>
<accession>P0A2E1</accession>
<accession>P06192</accession>
<name>GLYA_SALTY</name>
<gene>
    <name evidence="1" type="primary">glyA</name>
    <name type="ordered locus">STM2555</name>
</gene>
<keyword id="KW-0002">3D-structure</keyword>
<keyword id="KW-0028">Amino-acid biosynthesis</keyword>
<keyword id="KW-0963">Cytoplasm</keyword>
<keyword id="KW-0554">One-carbon metabolism</keyword>
<keyword id="KW-0663">Pyridoxal phosphate</keyword>
<keyword id="KW-1185">Reference proteome</keyword>
<keyword id="KW-0808">Transferase</keyword>
<feature type="chain" id="PRO_0000113658" description="Serine hydroxymethyltransferase">
    <location>
        <begin position="1"/>
        <end position="417"/>
    </location>
</feature>
<feature type="binding site" evidence="1">
    <location>
        <position position="121"/>
    </location>
    <ligand>
        <name>(6S)-5,6,7,8-tetrahydrofolate</name>
        <dbReference type="ChEBI" id="CHEBI:57453"/>
    </ligand>
</feature>
<feature type="binding site" evidence="1">
    <location>
        <begin position="125"/>
        <end position="127"/>
    </location>
    <ligand>
        <name>(6S)-5,6,7,8-tetrahydrofolate</name>
        <dbReference type="ChEBI" id="CHEBI:57453"/>
    </ligand>
</feature>
<feature type="binding site" evidence="1">
    <location>
        <begin position="355"/>
        <end position="357"/>
    </location>
    <ligand>
        <name>(6S)-5,6,7,8-tetrahydrofolate</name>
        <dbReference type="ChEBI" id="CHEBI:57453"/>
    </ligand>
</feature>
<feature type="site" description="Plays an important role in substrate specificity" evidence="1">
    <location>
        <position position="228"/>
    </location>
</feature>
<feature type="modified residue" description="N6-(pyridoxal phosphate)lysine" evidence="1">
    <location>
        <position position="229"/>
    </location>
</feature>
<feature type="sequence conflict" description="In Ref. 1; CAA33808." evidence="3" ref="1">
    <original>L</original>
    <variation>S</variation>
    <location>
        <position position="161"/>
    </location>
</feature>
<feature type="sequence conflict" description="In Ref. 3; AAA27135." evidence="3" ref="3">
    <original>I</original>
    <variation>Y</variation>
    <location>
        <position position="193"/>
    </location>
</feature>
<feature type="sequence conflict" description="In Ref. 1; CAA33808." evidence="3" ref="1">
    <original>A</original>
    <variation>G</variation>
    <location>
        <position position="275"/>
    </location>
</feature>
<feature type="turn" evidence="4">
    <location>
        <begin position="3"/>
        <end position="5"/>
    </location>
</feature>
<feature type="helix" evidence="4">
    <location>
        <begin position="8"/>
        <end position="11"/>
    </location>
</feature>
<feature type="helix" evidence="4">
    <location>
        <begin position="13"/>
        <end position="28"/>
    </location>
</feature>
<feature type="strand" evidence="4">
    <location>
        <begin position="29"/>
        <end position="31"/>
    </location>
</feature>
<feature type="helix" evidence="4">
    <location>
        <begin position="41"/>
        <end position="47"/>
    </location>
</feature>
<feature type="helix" evidence="4">
    <location>
        <begin position="50"/>
        <end position="53"/>
    </location>
</feature>
<feature type="helix" evidence="4">
    <location>
        <begin position="72"/>
        <end position="86"/>
    </location>
</feature>
<feature type="strand" evidence="4">
    <location>
        <begin position="89"/>
        <end position="92"/>
    </location>
</feature>
<feature type="helix" evidence="4">
    <location>
        <begin position="98"/>
        <end position="109"/>
    </location>
</feature>
<feature type="strand" evidence="4">
    <location>
        <begin position="115"/>
        <end position="121"/>
    </location>
</feature>
<feature type="helix" evidence="4">
    <location>
        <begin position="136"/>
        <end position="139"/>
    </location>
</feature>
<feature type="strand" evidence="4">
    <location>
        <begin position="140"/>
        <end position="147"/>
    </location>
</feature>
<feature type="helix" evidence="4">
    <location>
        <begin position="155"/>
        <end position="165"/>
    </location>
</feature>
<feature type="strand" evidence="4">
    <location>
        <begin position="168"/>
        <end position="172"/>
    </location>
</feature>
<feature type="helix" evidence="4">
    <location>
        <begin position="183"/>
        <end position="192"/>
    </location>
</feature>
<feature type="strand" evidence="4">
    <location>
        <begin position="196"/>
        <end position="200"/>
    </location>
</feature>
<feature type="turn" evidence="4">
    <location>
        <begin position="202"/>
        <end position="204"/>
    </location>
</feature>
<feature type="helix" evidence="4">
    <location>
        <begin position="205"/>
        <end position="209"/>
    </location>
</feature>
<feature type="turn" evidence="4">
    <location>
        <begin position="217"/>
        <end position="219"/>
    </location>
</feature>
<feature type="strand" evidence="4">
    <location>
        <begin position="220"/>
        <end position="228"/>
    </location>
</feature>
<feature type="helix" evidence="4">
    <location>
        <begin position="229"/>
        <end position="231"/>
    </location>
</feature>
<feature type="strand" evidence="4">
    <location>
        <begin position="237"/>
        <end position="243"/>
    </location>
</feature>
<feature type="helix" evidence="4">
    <location>
        <begin position="246"/>
        <end position="255"/>
    </location>
</feature>
<feature type="helix" evidence="4">
    <location>
        <begin position="266"/>
        <end position="278"/>
    </location>
</feature>
<feature type="helix" evidence="4">
    <location>
        <begin position="282"/>
        <end position="304"/>
    </location>
</feature>
<feature type="helix" evidence="4">
    <location>
        <begin position="310"/>
        <end position="312"/>
    </location>
</feature>
<feature type="strand" evidence="4">
    <location>
        <begin position="315"/>
        <end position="322"/>
    </location>
</feature>
<feature type="helix" evidence="4">
    <location>
        <begin position="324"/>
        <end position="326"/>
    </location>
</feature>
<feature type="helix" evidence="4">
    <location>
        <begin position="330"/>
        <end position="339"/>
    </location>
</feature>
<feature type="strand" evidence="4">
    <location>
        <begin position="345"/>
        <end position="347"/>
    </location>
</feature>
<feature type="turn" evidence="4">
    <location>
        <begin position="356"/>
        <end position="358"/>
    </location>
</feature>
<feature type="strand" evidence="4">
    <location>
        <begin position="360"/>
        <end position="365"/>
    </location>
</feature>
<feature type="helix" evidence="4">
    <location>
        <begin position="367"/>
        <end position="371"/>
    </location>
</feature>
<feature type="helix" evidence="4">
    <location>
        <begin position="376"/>
        <end position="391"/>
    </location>
</feature>
<feature type="turn" evidence="4">
    <location>
        <begin position="392"/>
        <end position="394"/>
    </location>
</feature>
<feature type="helix" evidence="4">
    <location>
        <begin position="396"/>
        <end position="412"/>
    </location>
</feature>
<evidence type="ECO:0000255" key="1">
    <source>
        <dbReference type="HAMAP-Rule" id="MF_00051"/>
    </source>
</evidence>
<evidence type="ECO:0000269" key="2">
    <source ref="4"/>
</evidence>
<evidence type="ECO:0000305" key="3"/>
<evidence type="ECO:0007829" key="4">
    <source>
        <dbReference type="PDB" id="3GBX"/>
    </source>
</evidence>